<sequence>MPKVTVYNQTGSQVGEIELAEAIFGIEPNEAVLFEAVMMQRASLRQGTHKVKTRSEVRGGGRKPWRQKGTGRARQGSIRSPQWRGGGTVFGPTPRSYAYKLPKKVRRLAIKSALATKVVENNIVVLEDLVLNAPKTKDMLAVLKGLTVEKKALIVTADANESVELSARNIPGVTVITADGVNVLDVLHHDKLIMTKAAVEKVEEVLA</sequence>
<organism>
    <name type="scientific">Bacillus cereus (strain ATCC 14579 / DSM 31 / CCUG 7414 / JCM 2152 / NBRC 15305 / NCIMB 9373 / NCTC 2599 / NRRL B-3711)</name>
    <dbReference type="NCBI Taxonomy" id="226900"/>
    <lineage>
        <taxon>Bacteria</taxon>
        <taxon>Bacillati</taxon>
        <taxon>Bacillota</taxon>
        <taxon>Bacilli</taxon>
        <taxon>Bacillales</taxon>
        <taxon>Bacillaceae</taxon>
        <taxon>Bacillus</taxon>
        <taxon>Bacillus cereus group</taxon>
    </lineage>
</organism>
<dbReference type="EMBL" id="AE016877">
    <property type="protein sequence ID" value="AAP07213.1"/>
    <property type="molecule type" value="Genomic_DNA"/>
</dbReference>
<dbReference type="RefSeq" id="NP_830012.1">
    <property type="nucleotide sequence ID" value="NC_004722.1"/>
</dbReference>
<dbReference type="RefSeq" id="WP_001127258.1">
    <property type="nucleotide sequence ID" value="NZ_CP138336.1"/>
</dbReference>
<dbReference type="SMR" id="Q81J41"/>
<dbReference type="STRING" id="226900.BC_0132"/>
<dbReference type="GeneID" id="93010942"/>
<dbReference type="KEGG" id="bce:BC0132"/>
<dbReference type="PATRIC" id="fig|226900.8.peg.133"/>
<dbReference type="HOGENOM" id="CLU_041575_5_2_9"/>
<dbReference type="OrthoDB" id="9803201at2"/>
<dbReference type="PRO" id="PR:Q81J41"/>
<dbReference type="Proteomes" id="UP000001417">
    <property type="component" value="Chromosome"/>
</dbReference>
<dbReference type="GO" id="GO:1990904">
    <property type="term" value="C:ribonucleoprotein complex"/>
    <property type="evidence" value="ECO:0007669"/>
    <property type="project" value="UniProtKB-KW"/>
</dbReference>
<dbReference type="GO" id="GO:0005840">
    <property type="term" value="C:ribosome"/>
    <property type="evidence" value="ECO:0007669"/>
    <property type="project" value="UniProtKB-KW"/>
</dbReference>
<dbReference type="GO" id="GO:0019843">
    <property type="term" value="F:rRNA binding"/>
    <property type="evidence" value="ECO:0007669"/>
    <property type="project" value="UniProtKB-UniRule"/>
</dbReference>
<dbReference type="GO" id="GO:0003735">
    <property type="term" value="F:structural constituent of ribosome"/>
    <property type="evidence" value="ECO:0000318"/>
    <property type="project" value="GO_Central"/>
</dbReference>
<dbReference type="GO" id="GO:0006412">
    <property type="term" value="P:translation"/>
    <property type="evidence" value="ECO:0007669"/>
    <property type="project" value="UniProtKB-UniRule"/>
</dbReference>
<dbReference type="FunFam" id="3.40.1370.10:FF:000003">
    <property type="entry name" value="50S ribosomal protein L4"/>
    <property type="match status" value="1"/>
</dbReference>
<dbReference type="Gene3D" id="3.40.1370.10">
    <property type="match status" value="1"/>
</dbReference>
<dbReference type="HAMAP" id="MF_01328_B">
    <property type="entry name" value="Ribosomal_uL4_B"/>
    <property type="match status" value="1"/>
</dbReference>
<dbReference type="InterPro" id="IPR002136">
    <property type="entry name" value="Ribosomal_uL4"/>
</dbReference>
<dbReference type="InterPro" id="IPR013005">
    <property type="entry name" value="Ribosomal_uL4-like"/>
</dbReference>
<dbReference type="InterPro" id="IPR023574">
    <property type="entry name" value="Ribosomal_uL4_dom_sf"/>
</dbReference>
<dbReference type="NCBIfam" id="TIGR03953">
    <property type="entry name" value="rplD_bact"/>
    <property type="match status" value="1"/>
</dbReference>
<dbReference type="PANTHER" id="PTHR10746">
    <property type="entry name" value="50S RIBOSOMAL PROTEIN L4"/>
    <property type="match status" value="1"/>
</dbReference>
<dbReference type="PANTHER" id="PTHR10746:SF6">
    <property type="entry name" value="LARGE RIBOSOMAL SUBUNIT PROTEIN UL4M"/>
    <property type="match status" value="1"/>
</dbReference>
<dbReference type="Pfam" id="PF00573">
    <property type="entry name" value="Ribosomal_L4"/>
    <property type="match status" value="1"/>
</dbReference>
<dbReference type="SUPFAM" id="SSF52166">
    <property type="entry name" value="Ribosomal protein L4"/>
    <property type="match status" value="1"/>
</dbReference>
<feature type="chain" id="PRO_0000129180" description="Large ribosomal subunit protein uL4">
    <location>
        <begin position="1"/>
        <end position="207"/>
    </location>
</feature>
<feature type="region of interest" description="Disordered" evidence="2">
    <location>
        <begin position="45"/>
        <end position="89"/>
    </location>
</feature>
<feature type="compositionally biased region" description="Basic residues" evidence="2">
    <location>
        <begin position="60"/>
        <end position="71"/>
    </location>
</feature>
<protein>
    <recommendedName>
        <fullName evidence="1">Large ribosomal subunit protein uL4</fullName>
    </recommendedName>
    <alternativeName>
        <fullName evidence="3">50S ribosomal protein L4</fullName>
    </alternativeName>
</protein>
<evidence type="ECO:0000255" key="1">
    <source>
        <dbReference type="HAMAP-Rule" id="MF_01328"/>
    </source>
</evidence>
<evidence type="ECO:0000256" key="2">
    <source>
        <dbReference type="SAM" id="MobiDB-lite"/>
    </source>
</evidence>
<evidence type="ECO:0000305" key="3"/>
<comment type="function">
    <text evidence="1">One of the primary rRNA binding proteins, this protein initially binds near the 5'-end of the 23S rRNA. It is important during the early stages of 50S assembly. It makes multiple contacts with different domains of the 23S rRNA in the assembled 50S subunit and ribosome.</text>
</comment>
<comment type="function">
    <text evidence="1">Forms part of the polypeptide exit tunnel.</text>
</comment>
<comment type="subunit">
    <text evidence="1">Part of the 50S ribosomal subunit.</text>
</comment>
<comment type="similarity">
    <text evidence="1">Belongs to the universal ribosomal protein uL4 family.</text>
</comment>
<keyword id="KW-1185">Reference proteome</keyword>
<keyword id="KW-0687">Ribonucleoprotein</keyword>
<keyword id="KW-0689">Ribosomal protein</keyword>
<keyword id="KW-0694">RNA-binding</keyword>
<keyword id="KW-0699">rRNA-binding</keyword>
<name>RL4_BACCR</name>
<accession>Q81J41</accession>
<proteinExistence type="inferred from homology"/>
<gene>
    <name evidence="1" type="primary">rplD</name>
    <name type="ordered locus">BC_0132</name>
</gene>
<reference key="1">
    <citation type="journal article" date="2003" name="Nature">
        <title>Genome sequence of Bacillus cereus and comparative analysis with Bacillus anthracis.</title>
        <authorList>
            <person name="Ivanova N."/>
            <person name="Sorokin A."/>
            <person name="Anderson I."/>
            <person name="Galleron N."/>
            <person name="Candelon B."/>
            <person name="Kapatral V."/>
            <person name="Bhattacharyya A."/>
            <person name="Reznik G."/>
            <person name="Mikhailova N."/>
            <person name="Lapidus A."/>
            <person name="Chu L."/>
            <person name="Mazur M."/>
            <person name="Goltsman E."/>
            <person name="Larsen N."/>
            <person name="D'Souza M."/>
            <person name="Walunas T."/>
            <person name="Grechkin Y."/>
            <person name="Pusch G."/>
            <person name="Haselkorn R."/>
            <person name="Fonstein M."/>
            <person name="Ehrlich S.D."/>
            <person name="Overbeek R."/>
            <person name="Kyrpides N.C."/>
        </authorList>
    </citation>
    <scope>NUCLEOTIDE SEQUENCE [LARGE SCALE GENOMIC DNA]</scope>
    <source>
        <strain>ATCC 14579 / DSM 31 / CCUG 7414 / JCM 2152 / NBRC 15305 / NCIMB 9373 / NCTC 2599 / NRRL B-3711</strain>
    </source>
</reference>